<evidence type="ECO:0000250" key="1">
    <source>
        <dbReference type="UniProtKB" id="P97260"/>
    </source>
</evidence>
<evidence type="ECO:0000255" key="2"/>
<evidence type="ECO:0000255" key="3">
    <source>
        <dbReference type="PROSITE-ProRule" id="PRU00199"/>
    </source>
</evidence>
<evidence type="ECO:0000269" key="4">
    <source>
    </source>
</evidence>
<evidence type="ECO:0000269" key="5">
    <source>
    </source>
</evidence>
<evidence type="ECO:0000269" key="6">
    <source>
    </source>
</evidence>
<evidence type="ECO:0000269" key="7">
    <source>
    </source>
</evidence>
<evidence type="ECO:0000305" key="8"/>
<evidence type="ECO:0000312" key="9">
    <source>
        <dbReference type="EMBL" id="CAA17795.1"/>
    </source>
</evidence>
<evidence type="ECO:0007744" key="10">
    <source>
        <dbReference type="PDB" id="4YHC"/>
    </source>
</evidence>
<evidence type="ECO:0007744" key="11">
    <source>
        <dbReference type="PDB" id="5GRS"/>
    </source>
</evidence>
<evidence type="ECO:0007829" key="12">
    <source>
        <dbReference type="PDB" id="4YHC"/>
    </source>
</evidence>
<dbReference type="EMBL" id="CU329671">
    <property type="protein sequence ID" value="CAA17795.1"/>
    <property type="molecule type" value="Genomic_DNA"/>
</dbReference>
<dbReference type="PIR" id="T40354">
    <property type="entry name" value="T40354"/>
</dbReference>
<dbReference type="RefSeq" id="NP_596673.1">
    <property type="nucleotide sequence ID" value="NM_001022595.2"/>
</dbReference>
<dbReference type="PDB" id="4YHC">
    <property type="method" value="X-ray"/>
    <property type="resolution" value="2.05 A"/>
    <property type="chains" value="A/B=567-961, A/B=986-1054"/>
</dbReference>
<dbReference type="PDB" id="5GRS">
    <property type="method" value="EM"/>
    <property type="resolution" value="5.40 A"/>
    <property type="chains" value="A/B/C/D=567-961, I/J/K/L=986-1085"/>
</dbReference>
<dbReference type="PDBsum" id="4YHC"/>
<dbReference type="PDBsum" id="5GRS"/>
<dbReference type="EMDB" id="EMD-9537"/>
<dbReference type="SMR" id="O43043"/>
<dbReference type="BioGRID" id="277580">
    <property type="interactions" value="6"/>
</dbReference>
<dbReference type="ComplexPortal" id="CPX-25718">
    <property type="entry name" value="SREBP-SCAP transcription regulator complex"/>
</dbReference>
<dbReference type="STRING" id="284812.O43043"/>
<dbReference type="GlyCosmos" id="O43043">
    <property type="glycosylation" value="3 sites, No reported glycans"/>
</dbReference>
<dbReference type="iPTMnet" id="O43043"/>
<dbReference type="PaxDb" id="4896-SPBC3B9.15c.1"/>
<dbReference type="EnsemblFungi" id="SPBC3B9.15c.1">
    <property type="protein sequence ID" value="SPBC3B9.15c.1:pep"/>
    <property type="gene ID" value="SPBC3B9.15c"/>
</dbReference>
<dbReference type="GeneID" id="2541065"/>
<dbReference type="KEGG" id="spo:2541065"/>
<dbReference type="PomBase" id="SPBC3B9.15c">
    <property type="gene designation" value="scp1"/>
</dbReference>
<dbReference type="VEuPathDB" id="FungiDB:SPBC3B9.15c"/>
<dbReference type="eggNOG" id="KOG1933">
    <property type="taxonomic scope" value="Eukaryota"/>
</dbReference>
<dbReference type="HOGENOM" id="CLU_287002_0_0_1"/>
<dbReference type="InParanoid" id="O43043"/>
<dbReference type="OMA" id="WRWSTFF"/>
<dbReference type="PhylomeDB" id="O43043"/>
<dbReference type="EvolutionaryTrace" id="O43043"/>
<dbReference type="PRO" id="PR:O43043"/>
<dbReference type="Proteomes" id="UP000002485">
    <property type="component" value="Chromosome II"/>
</dbReference>
<dbReference type="GO" id="GO:0098554">
    <property type="term" value="C:cytoplasmic side of endoplasmic reticulum membrane"/>
    <property type="evidence" value="ECO:0000304"/>
    <property type="project" value="PomBase"/>
</dbReference>
<dbReference type="GO" id="GO:0005783">
    <property type="term" value="C:endoplasmic reticulum"/>
    <property type="evidence" value="ECO:0007005"/>
    <property type="project" value="PomBase"/>
</dbReference>
<dbReference type="GO" id="GO:0005789">
    <property type="term" value="C:endoplasmic reticulum membrane"/>
    <property type="evidence" value="ECO:0000318"/>
    <property type="project" value="GO_Central"/>
</dbReference>
<dbReference type="GO" id="GO:0000139">
    <property type="term" value="C:Golgi membrane"/>
    <property type="evidence" value="ECO:0000304"/>
    <property type="project" value="PomBase"/>
</dbReference>
<dbReference type="GO" id="GO:0032936">
    <property type="term" value="C:SREBP-SCAP complex"/>
    <property type="evidence" value="ECO:0000353"/>
    <property type="project" value="PomBase"/>
</dbReference>
<dbReference type="GO" id="GO:0032934">
    <property type="term" value="F:sterol binding"/>
    <property type="evidence" value="ECO:0007669"/>
    <property type="project" value="InterPro"/>
</dbReference>
<dbReference type="GO" id="GO:0071456">
    <property type="term" value="P:cellular response to hypoxia"/>
    <property type="evidence" value="ECO:0000304"/>
    <property type="project" value="PomBase"/>
</dbReference>
<dbReference type="GO" id="GO:0070452">
    <property type="term" value="P:positive regulation of ergosterol biosynthetic process"/>
    <property type="evidence" value="ECO:0000305"/>
    <property type="project" value="PomBase"/>
</dbReference>
<dbReference type="GO" id="GO:0045540">
    <property type="term" value="P:regulation of cholesterol biosynthetic process"/>
    <property type="evidence" value="ECO:0000318"/>
    <property type="project" value="GO_Central"/>
</dbReference>
<dbReference type="GO" id="GO:0032933">
    <property type="term" value="P:SREBP signaling pathway"/>
    <property type="evidence" value="ECO:0000315"/>
    <property type="project" value="PomBase"/>
</dbReference>
<dbReference type="GO" id="GO:0008202">
    <property type="term" value="P:steroid metabolic process"/>
    <property type="evidence" value="ECO:0007669"/>
    <property type="project" value="UniProtKB-KW"/>
</dbReference>
<dbReference type="Gene3D" id="2.130.10.10">
    <property type="entry name" value="YVTN repeat-like/Quinoprotein amine dehydrogenase"/>
    <property type="match status" value="1"/>
</dbReference>
<dbReference type="InterPro" id="IPR053958">
    <property type="entry name" value="HMGCR/SNAP/NPC1-like_SSD"/>
</dbReference>
<dbReference type="InterPro" id="IPR030225">
    <property type="entry name" value="SCAP"/>
</dbReference>
<dbReference type="InterPro" id="IPR000731">
    <property type="entry name" value="SSD"/>
</dbReference>
<dbReference type="InterPro" id="IPR015943">
    <property type="entry name" value="WD40/YVTN_repeat-like_dom_sf"/>
</dbReference>
<dbReference type="InterPro" id="IPR036322">
    <property type="entry name" value="WD40_repeat_dom_sf"/>
</dbReference>
<dbReference type="PANTHER" id="PTHR46378">
    <property type="entry name" value="STEROL REGULATORY ELEMENT-BINDING PROTEIN CLEAVAGE-ACTIVATING PROTEIN"/>
    <property type="match status" value="1"/>
</dbReference>
<dbReference type="PANTHER" id="PTHR46378:SF1">
    <property type="entry name" value="STEROL REGULATORY ELEMENT-BINDING PROTEIN CLEAVAGE-ACTIVATING PROTEIN"/>
    <property type="match status" value="1"/>
</dbReference>
<dbReference type="Pfam" id="PF12349">
    <property type="entry name" value="Sterol-sensing"/>
    <property type="match status" value="1"/>
</dbReference>
<dbReference type="SUPFAM" id="SSF50978">
    <property type="entry name" value="WD40 repeat-like"/>
    <property type="match status" value="1"/>
</dbReference>
<dbReference type="PROSITE" id="PS50156">
    <property type="entry name" value="SSD"/>
    <property type="match status" value="1"/>
</dbReference>
<organism>
    <name type="scientific">Schizosaccharomyces pombe (strain 972 / ATCC 24843)</name>
    <name type="common">Fission yeast</name>
    <dbReference type="NCBI Taxonomy" id="284812"/>
    <lineage>
        <taxon>Eukaryota</taxon>
        <taxon>Fungi</taxon>
        <taxon>Dikarya</taxon>
        <taxon>Ascomycota</taxon>
        <taxon>Taphrinomycotina</taxon>
        <taxon>Schizosaccharomycetes</taxon>
        <taxon>Schizosaccharomycetales</taxon>
        <taxon>Schizosaccharomycetaceae</taxon>
        <taxon>Schizosaccharomyces</taxon>
    </lineage>
</organism>
<sequence length="1086" mass="125129">MRIFTLGKGRISRGYARQVNPSLFAKYSYCIANNPWYFILVFTLLSITGIYSSLVAYQQSLYDQSLARWSAWYAESINAEANVITKQLYLLGTNTSVFSEDYLSNAYRWETSFHQYLAEYGYPCIRDEKSCVTISPIPKYYGKVDPVAQYSYTKGLPENEREVNKLRNDTIAEGFDSLSAFVITYFLKPEQVDTFHVVLKKFISETPNLYASLLDTSPTTVVARIPDLTVIYRWYLWVGFGVGLFAYLYLSLVRLHDIRAKFGLTATIFIQSGTAYFSTCSLLYFFERTGPICPWPMAYYIIIFMDIENSFRLLRAVIASPQTKRVPSRIMEGFSSTIIASFSSLLKKLLTLFVLSFFVYPLVQEFCLFLACSFVVSFLLHGSFFLAVLSVDIRRLELQDFLDSNSSNRNSKWWVPYLEYVRFMWSPWIIDNLGTVSFHMYVIYLQLQSSTDINGSWRLASPNIRFLITLYHRLGRILRERKLFPLITTGWFGDPTFLEALKEKTMAENLVIALYRPVILDTVNRRDYTNVYNSFHDRRVWRWSTFFSILFAIDFAVGLLVKALLRGWSDHDELSTDTTLHEEKFRIEPVPVHHQLDILKIAVSENYKTFASVGLDRCLVVWDLRQWCTKLVLSKEQMPRTLKAIALDPQGNYVSLFSKDTLFILNVESPCLMLQHSYHCKPNSKLNVFWMPGTHKDDEWKNFELVVVESSGEIQVFSLTIEIEGADIALVEKFQLSSPIIKSISIVSPTANRIACLTESGEVTVYSKKGPVWSPKILSQNKNYLTETKKDIYGIAMADILFLARDSGVDMIDLKNDELLHSFTLPPIKVNTFSVGVSNSRFVNGQFRVSSISFCFTHAVTEKVLYYYYGNECNESYIILNKWDQQPNLVDVHDPDNSLACLTFDELQENIHEVEDASECVMSSDGLYIFGMRRKSSSGICPTADEKNEDNGFTLRNRKLRTGHYNWTSYVPLLDSYMQDMEHKKNTHSGGETQVWEVWMYSQSEKKHRCKSLKMYNSLIIADPGPSLAVSDRCVAIVLGNYVALVGYGSEIFRDFYQIRNSDEMDRILRRKRKNLQRKRSGTIGC</sequence>
<keyword id="KW-0002">3D-structure</keyword>
<keyword id="KW-0256">Endoplasmic reticulum</keyword>
<keyword id="KW-0325">Glycoprotein</keyword>
<keyword id="KW-0333">Golgi apparatus</keyword>
<keyword id="KW-0443">Lipid metabolism</keyword>
<keyword id="KW-0446">Lipid-binding</keyword>
<keyword id="KW-0472">Membrane</keyword>
<keyword id="KW-1185">Reference proteome</keyword>
<keyword id="KW-0677">Repeat</keyword>
<keyword id="KW-0753">Steroid metabolism</keyword>
<keyword id="KW-0812">Transmembrane</keyword>
<keyword id="KW-1133">Transmembrane helix</keyword>
<keyword id="KW-0853">WD repeat</keyword>
<proteinExistence type="evidence at protein level"/>
<name>SCAP_SCHPO</name>
<protein>
    <recommendedName>
        <fullName>Sterol regulatory element-binding protein cleavage-activating protein</fullName>
        <shortName>SCAP</shortName>
        <shortName>SREBP cleavage-activating protein</shortName>
    </recommendedName>
</protein>
<reference key="1">
    <citation type="journal article" date="2002" name="Nature">
        <title>The genome sequence of Schizosaccharomyces pombe.</title>
        <authorList>
            <person name="Wood V."/>
            <person name="Gwilliam R."/>
            <person name="Rajandream M.A."/>
            <person name="Lyne M.H."/>
            <person name="Lyne R."/>
            <person name="Stewart A."/>
            <person name="Sgouros J.G."/>
            <person name="Peat N."/>
            <person name="Hayles J."/>
            <person name="Baker S.G."/>
            <person name="Basham D."/>
            <person name="Bowman S."/>
            <person name="Brooks K."/>
            <person name="Brown D."/>
            <person name="Brown S."/>
            <person name="Chillingworth T."/>
            <person name="Churcher C.M."/>
            <person name="Collins M."/>
            <person name="Connor R."/>
            <person name="Cronin A."/>
            <person name="Davis P."/>
            <person name="Feltwell T."/>
            <person name="Fraser A."/>
            <person name="Gentles S."/>
            <person name="Goble A."/>
            <person name="Hamlin N."/>
            <person name="Harris D.E."/>
            <person name="Hidalgo J."/>
            <person name="Hodgson G."/>
            <person name="Holroyd S."/>
            <person name="Hornsby T."/>
            <person name="Howarth S."/>
            <person name="Huckle E.J."/>
            <person name="Hunt S."/>
            <person name="Jagels K."/>
            <person name="James K.D."/>
            <person name="Jones L."/>
            <person name="Jones M."/>
            <person name="Leather S."/>
            <person name="McDonald S."/>
            <person name="McLean J."/>
            <person name="Mooney P."/>
            <person name="Moule S."/>
            <person name="Mungall K.L."/>
            <person name="Murphy L.D."/>
            <person name="Niblett D."/>
            <person name="Odell C."/>
            <person name="Oliver K."/>
            <person name="O'Neil S."/>
            <person name="Pearson D."/>
            <person name="Quail M.A."/>
            <person name="Rabbinowitsch E."/>
            <person name="Rutherford K.M."/>
            <person name="Rutter S."/>
            <person name="Saunders D."/>
            <person name="Seeger K."/>
            <person name="Sharp S."/>
            <person name="Skelton J."/>
            <person name="Simmonds M.N."/>
            <person name="Squares R."/>
            <person name="Squares S."/>
            <person name="Stevens K."/>
            <person name="Taylor K."/>
            <person name="Taylor R.G."/>
            <person name="Tivey A."/>
            <person name="Walsh S.V."/>
            <person name="Warren T."/>
            <person name="Whitehead S."/>
            <person name="Woodward J.R."/>
            <person name="Volckaert G."/>
            <person name="Aert R."/>
            <person name="Robben J."/>
            <person name="Grymonprez B."/>
            <person name="Weltjens I."/>
            <person name="Vanstreels E."/>
            <person name="Rieger M."/>
            <person name="Schaefer M."/>
            <person name="Mueller-Auer S."/>
            <person name="Gabel C."/>
            <person name="Fuchs M."/>
            <person name="Duesterhoeft A."/>
            <person name="Fritzc C."/>
            <person name="Holzer E."/>
            <person name="Moestl D."/>
            <person name="Hilbert H."/>
            <person name="Borzym K."/>
            <person name="Langer I."/>
            <person name="Beck A."/>
            <person name="Lehrach H."/>
            <person name="Reinhardt R."/>
            <person name="Pohl T.M."/>
            <person name="Eger P."/>
            <person name="Zimmermann W."/>
            <person name="Wedler H."/>
            <person name="Wambutt R."/>
            <person name="Purnelle B."/>
            <person name="Goffeau A."/>
            <person name="Cadieu E."/>
            <person name="Dreano S."/>
            <person name="Gloux S."/>
            <person name="Lelaure V."/>
            <person name="Mottier S."/>
            <person name="Galibert F."/>
            <person name="Aves S.J."/>
            <person name="Xiang Z."/>
            <person name="Hunt C."/>
            <person name="Moore K."/>
            <person name="Hurst S.M."/>
            <person name="Lucas M."/>
            <person name="Rochet M."/>
            <person name="Gaillardin C."/>
            <person name="Tallada V.A."/>
            <person name="Garzon A."/>
            <person name="Thode G."/>
            <person name="Daga R.R."/>
            <person name="Cruzado L."/>
            <person name="Jimenez J."/>
            <person name="Sanchez M."/>
            <person name="del Rey F."/>
            <person name="Benito J."/>
            <person name="Dominguez A."/>
            <person name="Revuelta J.L."/>
            <person name="Moreno S."/>
            <person name="Armstrong J."/>
            <person name="Forsburg S.L."/>
            <person name="Cerutti L."/>
            <person name="Lowe T."/>
            <person name="McCombie W.R."/>
            <person name="Paulsen I."/>
            <person name="Potashkin J."/>
            <person name="Shpakovski G.V."/>
            <person name="Ussery D."/>
            <person name="Barrell B.G."/>
            <person name="Nurse P."/>
        </authorList>
    </citation>
    <scope>NUCLEOTIDE SEQUENCE [LARGE SCALE GENOMIC DNA]</scope>
    <source>
        <strain>972 / ATCC 24843</strain>
    </source>
</reference>
<reference evidence="8" key="2">
    <citation type="journal article" date="2005" name="Cell">
        <title>SREBP pathway responds to sterols and functions as an oxygen sensor in fission yeast.</title>
        <authorList>
            <person name="Hughes A.L."/>
            <person name="Todd B.L."/>
            <person name="Espenshade P.J."/>
        </authorList>
    </citation>
    <scope>FUNCTION</scope>
    <scope>INTERACTION WITH SRE1</scope>
</reference>
<reference evidence="8" key="3">
    <citation type="journal article" date="2007" name="J. Biol. Chem.">
        <title>4-methyl sterols regulate fission yeast SREBP-Scap under low oxygen and cell stress.</title>
        <authorList>
            <person name="Hughes A.L."/>
            <person name="Lee C.-Y.S."/>
            <person name="Bien C.M."/>
            <person name="Espenshade P.J."/>
        </authorList>
    </citation>
    <scope>FUNCTION</scope>
    <scope>INTERACTION WITH 4-METHYL STEROLS</scope>
    <scope>MUTAGENESIS OF TYR-247; LEU-264 AND ASP-392</scope>
    <scope>DISRUPTION PHENOTYPE</scope>
</reference>
<reference evidence="10" key="4">
    <citation type="journal article" date="2015" name="Cell Res.">
        <title>Structure of the WD40 domain of SCAP from fission yeast reveals the molecular basis for SREBP recognition.</title>
        <authorList>
            <person name="Gong X."/>
            <person name="Li J."/>
            <person name="Shao W."/>
            <person name="Wu J."/>
            <person name="Qian H."/>
            <person name="Ren R."/>
            <person name="Espenshade P."/>
            <person name="Yan N."/>
        </authorList>
    </citation>
    <scope>X-RAY CRYSTALLOGRAPHY (2.05 ANGSTROMS) OF 567-961 AND 986-1054</scope>
    <scope>INTERACTION WITH SRE1</scope>
    <scope>MUTAGENESIS OF ARG-617; CYS-618; 635-LYS--LYS-643; LYS-659; CYS-680; LYS-685 AND ASP-1023</scope>
</reference>
<reference evidence="11" key="5">
    <citation type="journal article" date="2016" name="Cell Res.">
        <title>Complex structure of the fission yeast SREBP-SCAP binding domains reveals an oligomeric organization.</title>
        <authorList>
            <person name="Gong X."/>
            <person name="Qian H."/>
            <person name="Shao W."/>
            <person name="Li J."/>
            <person name="Wu J."/>
            <person name="Liu J.J."/>
            <person name="Li W."/>
            <person name="Wang H.W."/>
            <person name="Espenshade P."/>
            <person name="Yan N."/>
        </authorList>
    </citation>
    <scope>STRUCTURE BY ELECTRON MICROSCOPY (5.40 ANGSTROMS) OF 567-1085 IN COMPLEX WITH SRE1</scope>
    <scope>SUBUNIT</scope>
</reference>
<gene>
    <name evidence="9" type="primary">scp1</name>
    <name type="ORF">SPBC3B9.15c</name>
</gene>
<comment type="function">
    <text evidence="1 4 5">Escort protein required for sre1 processing at low sterol as well as oxygen levels. May regulate export of the scp1/sre1 complex from the ER at low sterol or oxygen levels (PubMed:15797383, PubMed:17595166). 4-methyl sterols bound to scp1 may mask an ER export signal in scp1 leading to retention of the complex in the ER (PubMed:15797383, PubMed:17595166). Release of 4-methyl sterols may trigger a conformational change in the SSD domain of scp1 unmasking the ER export signal leading to recruitment into COPII-coated vesicles, transport to the Golgi complex, proteolytic cleavage of sre1 in the Golgi, release of the transcription factor fragment of sre1 from the membrane, its import into the nucleus and up-regulation of genes required for ergosterol biosynthesis as well as anaerobic growth (By similarity). Binds 4-methyl sterols (PubMed:17595166).</text>
</comment>
<comment type="subunit">
    <text evidence="4 6 7">Forms a tight complex with scp1, composed of 4 copies of scp1 and 4 copies of sre1.</text>
</comment>
<comment type="subcellular location">
    <subcellularLocation>
        <location evidence="1">Endoplasmic reticulum membrane</location>
        <topology evidence="1">Multi-pass membrane protein</topology>
    </subcellularLocation>
    <subcellularLocation>
        <location evidence="1">Golgi apparatus membrane</location>
        <topology evidence="1">Multi-pass membrane protein</topology>
    </subcellularLocation>
</comment>
<comment type="disruption phenotype">
    <text evidence="5">Cells show absence of mature sre1 as well as inability to grow in the absence of oxygen.</text>
</comment>
<comment type="similarity">
    <text evidence="8">Belongs to the WD repeat SCAP family.</text>
</comment>
<feature type="chain" id="PRO_0000315874" description="Sterol regulatory element-binding protein cleavage-activating protein">
    <location>
        <begin position="1"/>
        <end position="1086"/>
    </location>
</feature>
<feature type="topological domain" description="Cytoplasmic" evidence="1">
    <location>
        <begin position="1"/>
        <end position="35"/>
    </location>
</feature>
<feature type="transmembrane region" description="Helical; Name=1" evidence="2">
    <location>
        <begin position="36"/>
        <end position="56"/>
    </location>
</feature>
<feature type="topological domain" description="Lumenal" evidence="1">
    <location>
        <begin position="57"/>
        <end position="229"/>
    </location>
</feature>
<feature type="transmembrane region" description="Helical; Name=2" evidence="2">
    <location>
        <begin position="230"/>
        <end position="250"/>
    </location>
</feature>
<feature type="topological domain" description="Cytoplasmic" evidence="1">
    <location>
        <begin position="251"/>
        <end position="265"/>
    </location>
</feature>
<feature type="transmembrane region" description="Helical; Name=3" evidence="2">
    <location>
        <begin position="266"/>
        <end position="286"/>
    </location>
</feature>
<feature type="topological domain" description="Lumenal" evidence="1">
    <location>
        <begin position="287"/>
        <end position="290"/>
    </location>
</feature>
<feature type="transmembrane region" description="Helical; Name=4" evidence="2">
    <location>
        <begin position="291"/>
        <end position="311"/>
    </location>
</feature>
<feature type="topological domain" description="Cytoplasmic" evidence="1">
    <location>
        <begin position="312"/>
        <end position="337"/>
    </location>
</feature>
<feature type="transmembrane region" description="Helical; Name=5" evidence="2">
    <location>
        <begin position="338"/>
        <end position="358"/>
    </location>
</feature>
<feature type="topological domain" description="Lumenal" evidence="1">
    <location>
        <begin position="359"/>
        <end position="367"/>
    </location>
</feature>
<feature type="transmembrane region" description="Helical; Name=6" evidence="2">
    <location>
        <begin position="368"/>
        <end position="388"/>
    </location>
</feature>
<feature type="topological domain" description="Cytoplasmic" evidence="1">
    <location>
        <begin position="389"/>
        <end position="422"/>
    </location>
</feature>
<feature type="transmembrane region" description="Helical; Name=7" evidence="2">
    <location>
        <begin position="423"/>
        <end position="443"/>
    </location>
</feature>
<feature type="topological domain" description="Lumenal" evidence="1">
    <location>
        <begin position="444"/>
        <end position="544"/>
    </location>
</feature>
<feature type="transmembrane region" description="Helical; Name=8" evidence="2">
    <location>
        <begin position="545"/>
        <end position="565"/>
    </location>
</feature>
<feature type="topological domain" description="Cytoplasmic" evidence="1">
    <location>
        <begin position="566"/>
        <end position="1086"/>
    </location>
</feature>
<feature type="domain" description="SSD" evidence="3">
    <location>
        <begin position="233"/>
        <end position="391"/>
    </location>
</feature>
<feature type="repeat" description="WD 1" evidence="2">
    <location>
        <begin position="593"/>
        <end position="632"/>
    </location>
</feature>
<feature type="repeat" description="WD 2" evidence="2">
    <location>
        <begin position="637"/>
        <end position="675"/>
    </location>
</feature>
<feature type="repeat" description="WD 3" evidence="2">
    <location>
        <begin position="680"/>
        <end position="727"/>
    </location>
</feature>
<feature type="repeat" description="WD 4" evidence="2">
    <location>
        <begin position="736"/>
        <end position="776"/>
    </location>
</feature>
<feature type="repeat" description="WD 5" evidence="2">
    <location>
        <begin position="963"/>
        <end position="1009"/>
    </location>
</feature>
<feature type="region of interest" description="Interaction with sre1" evidence="1">
    <location>
        <begin position="640"/>
        <end position="1086"/>
    </location>
</feature>
<feature type="short sequence motif" description="ER export signal" evidence="1">
    <location>
        <begin position="396"/>
        <end position="401"/>
    </location>
</feature>
<feature type="glycosylation site" description="N-linked (GlcNAc...) asparagine" evidence="2">
    <location>
        <position position="94"/>
    </location>
</feature>
<feature type="glycosylation site" description="N-linked (GlcNAc...) asparagine" evidence="2">
    <location>
        <position position="168"/>
    </location>
</feature>
<feature type="glycosylation site" description="N-linked (GlcNAc...) asparagine" evidence="2">
    <location>
        <position position="454"/>
    </location>
</feature>
<feature type="mutagenesis site" description="Loss of sterol dependence of sre1 proteolysis. Constitutive maturation of sre1." evidence="5">
    <original>Y</original>
    <variation>C</variation>
    <location>
        <position position="247"/>
    </location>
</feature>
<feature type="mutagenesis site" description="Loss of sterol dependence of sre1 proteolysis. Constitutive maturation of sre1." evidence="5">
    <original>L</original>
    <variation>F</variation>
    <location>
        <position position="264"/>
    </location>
</feature>
<feature type="mutagenesis site" description="Loss of sterol dependence of sre1 proteolysis. Constitutive maturation of sre1." evidence="5">
    <original>D</original>
    <variation>N</variation>
    <location>
        <position position="392"/>
    </location>
</feature>
<feature type="mutagenesis site" description="In Scp1-M1; strongly reduced interaction with sre1." evidence="6">
    <original>R</original>
    <variation>E</variation>
    <location>
        <position position="617"/>
    </location>
</feature>
<feature type="mutagenesis site" description="In Scp1-M4; reduced interaction with sre1; when associated with S-680." evidence="6">
    <original>C</original>
    <variation>S</variation>
    <location>
        <position position="618"/>
    </location>
</feature>
<feature type="mutagenesis site" description="In Scp1-M2; strongly reduced interaction with sre1." evidence="6">
    <original>KEQMPRTLK</original>
    <variation>EEQMPETLE</variation>
    <location>
        <begin position="635"/>
        <end position="643"/>
    </location>
</feature>
<feature type="mutagenesis site" description="In Scp1-M3; strongly reduced interaction with sre1; when associated with E-685." evidence="6">
    <original>K</original>
    <variation>E</variation>
    <location>
        <position position="659"/>
    </location>
</feature>
<feature type="mutagenesis site" description="In Scp1-M4; reduced interaction with sre1; when associated with S-618." evidence="6">
    <original>C</original>
    <variation>S</variation>
    <location>
        <position position="680"/>
    </location>
</feature>
<feature type="mutagenesis site" description="In Scp1-M3; strongly reduced interaction with sre1; when associated with E-659." evidence="6">
    <original>K</original>
    <variation>E</variation>
    <location>
        <position position="685"/>
    </location>
</feature>
<feature type="mutagenesis site" description="In Scp1-M5; reduced interaction with sre1." evidence="6">
    <original>D</original>
    <variation>K</variation>
    <location>
        <position position="1023"/>
    </location>
</feature>
<feature type="strand" evidence="12">
    <location>
        <begin position="569"/>
        <end position="573"/>
    </location>
</feature>
<feature type="helix" evidence="12">
    <location>
        <begin position="580"/>
        <end position="584"/>
    </location>
</feature>
<feature type="strand" evidence="12">
    <location>
        <begin position="585"/>
        <end position="589"/>
    </location>
</feature>
<feature type="strand" evidence="12">
    <location>
        <begin position="598"/>
        <end position="603"/>
    </location>
</feature>
<feature type="strand" evidence="12">
    <location>
        <begin position="609"/>
        <end position="614"/>
    </location>
</feature>
<feature type="strand" evidence="12">
    <location>
        <begin position="619"/>
        <end position="623"/>
    </location>
</feature>
<feature type="turn" evidence="12">
    <location>
        <begin position="624"/>
        <end position="627"/>
    </location>
</feature>
<feature type="strand" evidence="12">
    <location>
        <begin position="628"/>
        <end position="633"/>
    </location>
</feature>
<feature type="helix" evidence="12">
    <location>
        <begin position="635"/>
        <end position="637"/>
    </location>
</feature>
<feature type="strand" evidence="12">
    <location>
        <begin position="644"/>
        <end position="647"/>
    </location>
</feature>
<feature type="strand" evidence="12">
    <location>
        <begin position="651"/>
        <end position="657"/>
    </location>
</feature>
<feature type="strand" evidence="12">
    <location>
        <begin position="659"/>
        <end position="666"/>
    </location>
</feature>
<feature type="turn" evidence="12">
    <location>
        <begin position="667"/>
        <end position="670"/>
    </location>
</feature>
<feature type="strand" evidence="12">
    <location>
        <begin position="671"/>
        <end position="677"/>
    </location>
</feature>
<feature type="strand" evidence="12">
    <location>
        <begin position="686"/>
        <end position="692"/>
    </location>
</feature>
<feature type="strand" evidence="12">
    <location>
        <begin position="697"/>
        <end position="699"/>
    </location>
</feature>
<feature type="strand" evidence="12">
    <location>
        <begin position="701"/>
        <end position="709"/>
    </location>
</feature>
<feature type="strand" evidence="12">
    <location>
        <begin position="712"/>
        <end position="721"/>
    </location>
</feature>
<feature type="strand" evidence="12">
    <location>
        <begin position="726"/>
        <end position="735"/>
    </location>
</feature>
<feature type="strand" evidence="12">
    <location>
        <begin position="740"/>
        <end position="747"/>
    </location>
</feature>
<feature type="strand" evidence="12">
    <location>
        <begin position="752"/>
        <end position="758"/>
    </location>
</feature>
<feature type="strand" evidence="12">
    <location>
        <begin position="763"/>
        <end position="769"/>
    </location>
</feature>
<feature type="strand" evidence="12">
    <location>
        <begin position="772"/>
        <end position="777"/>
    </location>
</feature>
<feature type="helix" evidence="12">
    <location>
        <begin position="782"/>
        <end position="784"/>
    </location>
</feature>
<feature type="strand" evidence="12">
    <location>
        <begin position="791"/>
        <end position="795"/>
    </location>
</feature>
<feature type="helix" evidence="12">
    <location>
        <begin position="796"/>
        <end position="798"/>
    </location>
</feature>
<feature type="strand" evidence="12">
    <location>
        <begin position="800"/>
        <end position="804"/>
    </location>
</feature>
<feature type="strand" evidence="12">
    <location>
        <begin position="806"/>
        <end position="813"/>
    </location>
</feature>
<feature type="turn" evidence="12">
    <location>
        <begin position="814"/>
        <end position="817"/>
    </location>
</feature>
<feature type="strand" evidence="12">
    <location>
        <begin position="818"/>
        <end position="824"/>
    </location>
</feature>
<feature type="strand" evidence="12">
    <location>
        <begin position="834"/>
        <end position="839"/>
    </location>
</feature>
<feature type="strand" evidence="12">
    <location>
        <begin position="841"/>
        <end position="843"/>
    </location>
</feature>
<feature type="strand" evidence="12">
    <location>
        <begin position="846"/>
        <end position="858"/>
    </location>
</feature>
<feature type="turn" evidence="12">
    <location>
        <begin position="859"/>
        <end position="861"/>
    </location>
</feature>
<feature type="strand" evidence="12">
    <location>
        <begin position="864"/>
        <end position="869"/>
    </location>
</feature>
<feature type="turn" evidence="12">
    <location>
        <begin position="873"/>
        <end position="875"/>
    </location>
</feature>
<feature type="strand" evidence="12">
    <location>
        <begin position="876"/>
        <end position="886"/>
    </location>
</feature>
<feature type="turn" evidence="12">
    <location>
        <begin position="895"/>
        <end position="898"/>
    </location>
</feature>
<feature type="strand" evidence="12">
    <location>
        <begin position="899"/>
        <end position="902"/>
    </location>
</feature>
<feature type="helix" evidence="12">
    <location>
        <begin position="904"/>
        <end position="906"/>
    </location>
</feature>
<feature type="strand" evidence="12">
    <location>
        <begin position="909"/>
        <end position="914"/>
    </location>
</feature>
<feature type="strand" evidence="12">
    <location>
        <begin position="919"/>
        <end position="922"/>
    </location>
</feature>
<feature type="strand" evidence="12">
    <location>
        <begin position="926"/>
        <end position="939"/>
    </location>
</feature>
<feature type="strand" evidence="12">
    <location>
        <begin position="992"/>
        <end position="1002"/>
    </location>
</feature>
<feature type="turn" evidence="12">
    <location>
        <begin position="1003"/>
        <end position="1006"/>
    </location>
</feature>
<feature type="strand" evidence="12">
    <location>
        <begin position="1007"/>
        <end position="1018"/>
    </location>
</feature>
<feature type="strand" evidence="12">
    <location>
        <begin position="1027"/>
        <end position="1031"/>
    </location>
</feature>
<feature type="strand" evidence="12">
    <location>
        <begin position="1034"/>
        <end position="1039"/>
    </location>
</feature>
<feature type="strand" evidence="12">
    <location>
        <begin position="1042"/>
        <end position="1049"/>
    </location>
</feature>
<accession>O43043</accession>